<accession>Q61469</accession>
<accession>Q61690</accession>
<accession>Q6GT30</accession>
<accession>Q8BPB8</accession>
<protein>
    <recommendedName>
        <fullName evidence="21">Phospholipid phosphatase 1</fullName>
        <ecNumber evidence="7 8 9 14">3.1.3.-</ecNumber>
        <ecNumber evidence="12 15">3.1.3.106</ecNumber>
        <ecNumber evidence="7 15 17">3.1.3.4</ecNumber>
        <ecNumber evidence="7">3.6.1.75</ecNumber>
    </recommendedName>
    <alternativeName>
        <fullName>35 kDa PAP</fullName>
        <shortName>mPAP</shortName>
    </alternativeName>
    <alternativeName>
        <fullName>Hydrogen peroxide-inducible protein 53</fullName>
        <shortName>Hic53</shortName>
    </alternativeName>
    <alternativeName>
        <fullName>Lipid phosphate phosphohydrolase 1</fullName>
    </alternativeName>
    <alternativeName>
        <fullName>PAP2-alpha</fullName>
    </alternativeName>
    <alternativeName>
        <fullName>Phosphatidate phosphohydrolase type 2a</fullName>
    </alternativeName>
    <alternativeName>
        <fullName>Phosphatidic acid phosphatase 2a</fullName>
        <shortName>PAP-2a</shortName>
        <shortName>PAP2a</shortName>
    </alternativeName>
</protein>
<gene>
    <name evidence="25" type="primary">Plpp1</name>
    <name type="synonym">Hpic53</name>
    <name type="synonym">Lpp1</name>
    <name type="synonym">Ppap2a</name>
</gene>
<dbReference type="EC" id="3.1.3.-" evidence="7 8 9 14"/>
<dbReference type="EC" id="3.1.3.106" evidence="12 15"/>
<dbReference type="EC" id="3.1.3.4" evidence="7 15 17"/>
<dbReference type="EC" id="3.6.1.75" evidence="7"/>
<dbReference type="EMBL" id="L43371">
    <property type="protein sequence ID" value="AAA85353.1"/>
    <property type="status" value="ALT_SEQ"/>
    <property type="molecule type" value="mRNA"/>
</dbReference>
<dbReference type="EMBL" id="D84376">
    <property type="protein sequence ID" value="BAA12335.1"/>
    <property type="molecule type" value="mRNA"/>
</dbReference>
<dbReference type="EMBL" id="AY247795">
    <property type="protein sequence ID" value="AAP04434.1"/>
    <property type="molecule type" value="mRNA"/>
</dbReference>
<dbReference type="EMBL" id="AY247796">
    <property type="protein sequence ID" value="AAP04435.1"/>
    <property type="molecule type" value="mRNA"/>
</dbReference>
<dbReference type="EMBL" id="AK077275">
    <property type="protein sequence ID" value="BAC36724.1"/>
    <property type="molecule type" value="mRNA"/>
</dbReference>
<dbReference type="EMBL" id="BC061161">
    <property type="protein sequence ID" value="AAH61161.1"/>
    <property type="molecule type" value="mRNA"/>
</dbReference>
<dbReference type="CCDS" id="CCDS26776.1">
    <molecule id="Q61469-2"/>
</dbReference>
<dbReference type="CCDS" id="CCDS26777.1">
    <molecule id="Q61469-1"/>
</dbReference>
<dbReference type="PIR" id="S66668">
    <property type="entry name" value="S66668"/>
</dbReference>
<dbReference type="RefSeq" id="NP_032273.1">
    <molecule id="Q61469-2"/>
    <property type="nucleotide sequence ID" value="NM_008247.3"/>
</dbReference>
<dbReference type="RefSeq" id="NP_032929.1">
    <molecule id="Q61469-1"/>
    <property type="nucleotide sequence ID" value="NM_008903.2"/>
</dbReference>
<dbReference type="BioGRID" id="202316">
    <property type="interactions" value="1"/>
</dbReference>
<dbReference type="FunCoup" id="Q61469">
    <property type="interactions" value="596"/>
</dbReference>
<dbReference type="IntAct" id="Q61469">
    <property type="interactions" value="1"/>
</dbReference>
<dbReference type="STRING" id="10090.ENSMUSP00000016144"/>
<dbReference type="SwissLipids" id="SLP:000001978"/>
<dbReference type="GlyCosmos" id="Q61469">
    <property type="glycosylation" value="1 site, No reported glycans"/>
</dbReference>
<dbReference type="GlyGen" id="Q61469">
    <property type="glycosylation" value="2 sites, 1 O-linked glycan (1 site)"/>
</dbReference>
<dbReference type="iPTMnet" id="Q61469"/>
<dbReference type="PhosphoSitePlus" id="Q61469"/>
<dbReference type="SwissPalm" id="Q61469"/>
<dbReference type="jPOST" id="Q61469"/>
<dbReference type="PeptideAtlas" id="Q61469"/>
<dbReference type="ProteomicsDB" id="289770">
    <molecule id="Q61469-1"/>
</dbReference>
<dbReference type="ProteomicsDB" id="289771">
    <molecule id="Q61469-2"/>
</dbReference>
<dbReference type="Pumba" id="Q61469"/>
<dbReference type="Antibodypedia" id="11159">
    <property type="antibodies" value="186 antibodies from 27 providers"/>
</dbReference>
<dbReference type="DNASU" id="19012"/>
<dbReference type="Ensembl" id="ENSMUST00000016144.12">
    <molecule id="Q61469-2"/>
    <property type="protein sequence ID" value="ENSMUSP00000016144.5"/>
    <property type="gene ID" value="ENSMUSG00000021759.15"/>
</dbReference>
<dbReference type="Ensembl" id="ENSMUST00000070951.8">
    <molecule id="Q61469-1"/>
    <property type="protein sequence ID" value="ENSMUSP00000064423.7"/>
    <property type="gene ID" value="ENSMUSG00000021759.15"/>
</dbReference>
<dbReference type="GeneID" id="19012"/>
<dbReference type="KEGG" id="mmu:19012"/>
<dbReference type="UCSC" id="uc007rwq.2">
    <molecule id="Q61469-1"/>
    <property type="organism name" value="mouse"/>
</dbReference>
<dbReference type="UCSC" id="uc007rwr.2">
    <molecule id="Q61469-2"/>
    <property type="organism name" value="mouse"/>
</dbReference>
<dbReference type="AGR" id="MGI:108412"/>
<dbReference type="CTD" id="8611"/>
<dbReference type="MGI" id="MGI:108412">
    <property type="gene designation" value="Plpp1"/>
</dbReference>
<dbReference type="VEuPathDB" id="HostDB:ENSMUSG00000021759"/>
<dbReference type="GeneTree" id="ENSGT00940000156730"/>
<dbReference type="HOGENOM" id="CLU_021458_3_1_1"/>
<dbReference type="InParanoid" id="Q61469"/>
<dbReference type="OMA" id="NQHRYIE"/>
<dbReference type="OrthoDB" id="36191at9989"/>
<dbReference type="PhylomeDB" id="Q61469"/>
<dbReference type="TreeFam" id="TF316040"/>
<dbReference type="BRENDA" id="3.1.3.81">
    <property type="organism ID" value="3474"/>
</dbReference>
<dbReference type="Reactome" id="R-MMU-9845614">
    <property type="pathway name" value="Sphingolipid catabolism"/>
</dbReference>
<dbReference type="UniPathway" id="UPA00085"/>
<dbReference type="BioGRID-ORCS" id="19012">
    <property type="hits" value="2 hits in 49 CRISPR screens"/>
</dbReference>
<dbReference type="ChiTaRS" id="Plpp1">
    <property type="organism name" value="mouse"/>
</dbReference>
<dbReference type="PRO" id="PR:Q61469"/>
<dbReference type="Proteomes" id="UP000000589">
    <property type="component" value="Chromosome 13"/>
</dbReference>
<dbReference type="RNAct" id="Q61469">
    <property type="molecule type" value="protein"/>
</dbReference>
<dbReference type="Bgee" id="ENSMUSG00000021759">
    <property type="expression patterns" value="Expressed in seminal vesicle and 279 other cell types or tissues"/>
</dbReference>
<dbReference type="GO" id="GO:0016324">
    <property type="term" value="C:apical plasma membrane"/>
    <property type="evidence" value="ECO:0000250"/>
    <property type="project" value="UniProtKB"/>
</dbReference>
<dbReference type="GO" id="GO:0005901">
    <property type="term" value="C:caveola"/>
    <property type="evidence" value="ECO:0000314"/>
    <property type="project" value="UniProtKB"/>
</dbReference>
<dbReference type="GO" id="GO:0016020">
    <property type="term" value="C:membrane"/>
    <property type="evidence" value="ECO:0000250"/>
    <property type="project" value="UniProtKB"/>
</dbReference>
<dbReference type="GO" id="GO:0005886">
    <property type="term" value="C:plasma membrane"/>
    <property type="evidence" value="ECO:0000314"/>
    <property type="project" value="UniProtKB"/>
</dbReference>
<dbReference type="GO" id="GO:0106235">
    <property type="term" value="F:ceramide-1-phosphate phosphatase activity"/>
    <property type="evidence" value="ECO:0000314"/>
    <property type="project" value="UniProtKB"/>
</dbReference>
<dbReference type="GO" id="GO:0000810">
    <property type="term" value="F:diacylglycerol diphosphate phosphatase activity"/>
    <property type="evidence" value="ECO:0000314"/>
    <property type="project" value="UniProtKB"/>
</dbReference>
<dbReference type="GO" id="GO:0042577">
    <property type="term" value="F:lipid phosphatase activity"/>
    <property type="evidence" value="ECO:0000314"/>
    <property type="project" value="UniProtKB"/>
</dbReference>
<dbReference type="GO" id="GO:0052642">
    <property type="term" value="F:lysophosphatidic acid phosphatase activity"/>
    <property type="evidence" value="ECO:0007669"/>
    <property type="project" value="UniProtKB-EC"/>
</dbReference>
<dbReference type="GO" id="GO:0008195">
    <property type="term" value="F:phosphatidate phosphatase activity"/>
    <property type="evidence" value="ECO:0000314"/>
    <property type="project" value="UniProtKB"/>
</dbReference>
<dbReference type="GO" id="GO:0042392">
    <property type="term" value="F:sphingosine-1-phosphate phosphatase activity"/>
    <property type="evidence" value="ECO:0000314"/>
    <property type="project" value="UniProtKB"/>
</dbReference>
<dbReference type="GO" id="GO:0006672">
    <property type="term" value="P:ceramide metabolic process"/>
    <property type="evidence" value="ECO:0000314"/>
    <property type="project" value="UniProtKB"/>
</dbReference>
<dbReference type="GO" id="GO:0006651">
    <property type="term" value="P:diacylglycerol biosynthetic process"/>
    <property type="evidence" value="ECO:0000304"/>
    <property type="project" value="MGI"/>
</dbReference>
<dbReference type="GO" id="GO:0046839">
    <property type="term" value="P:phospholipid dephosphorylation"/>
    <property type="evidence" value="ECO:0000314"/>
    <property type="project" value="UniProtKB"/>
</dbReference>
<dbReference type="GO" id="GO:0006644">
    <property type="term" value="P:phospholipid metabolic process"/>
    <property type="evidence" value="ECO:0000314"/>
    <property type="project" value="UniProtKB"/>
</dbReference>
<dbReference type="GO" id="GO:0007165">
    <property type="term" value="P:signal transduction"/>
    <property type="evidence" value="ECO:0000315"/>
    <property type="project" value="UniProtKB"/>
</dbReference>
<dbReference type="GO" id="GO:0006670">
    <property type="term" value="P:sphingosine metabolic process"/>
    <property type="evidence" value="ECO:0000314"/>
    <property type="project" value="UniProtKB"/>
</dbReference>
<dbReference type="CDD" id="cd03384">
    <property type="entry name" value="PAP2_wunen"/>
    <property type="match status" value="1"/>
</dbReference>
<dbReference type="FunFam" id="1.20.144.10:FF:000007">
    <property type="entry name" value="phospholipid phosphatase 1 isoform X2"/>
    <property type="match status" value="1"/>
</dbReference>
<dbReference type="Gene3D" id="1.20.144.10">
    <property type="entry name" value="Phosphatidic acid phosphatase type 2/haloperoxidase"/>
    <property type="match status" value="1"/>
</dbReference>
<dbReference type="InterPro" id="IPR036938">
    <property type="entry name" value="P_Acid_Pase_2/haloperoxi_sf"/>
</dbReference>
<dbReference type="InterPro" id="IPR000326">
    <property type="entry name" value="P_Acid_Pase_2/haloperoxidase"/>
</dbReference>
<dbReference type="InterPro" id="IPR043216">
    <property type="entry name" value="PA_PP_rel"/>
</dbReference>
<dbReference type="PANTHER" id="PTHR10165">
    <property type="entry name" value="LIPID PHOSPHATE PHOSPHATASE"/>
    <property type="match status" value="1"/>
</dbReference>
<dbReference type="PANTHER" id="PTHR10165:SF26">
    <property type="entry name" value="PHOSPHOLIPID PHOSPHATASE 1"/>
    <property type="match status" value="1"/>
</dbReference>
<dbReference type="Pfam" id="PF01569">
    <property type="entry name" value="PAP2"/>
    <property type="match status" value="1"/>
</dbReference>
<dbReference type="SMART" id="SM00014">
    <property type="entry name" value="acidPPc"/>
    <property type="match status" value="1"/>
</dbReference>
<dbReference type="SUPFAM" id="SSF48317">
    <property type="entry name" value="Acid phosphatase/Vanadium-dependent haloperoxidase"/>
    <property type="match status" value="1"/>
</dbReference>
<name>PLPP1_MOUSE</name>
<organism>
    <name type="scientific">Mus musculus</name>
    <name type="common">Mouse</name>
    <dbReference type="NCBI Taxonomy" id="10090"/>
    <lineage>
        <taxon>Eukaryota</taxon>
        <taxon>Metazoa</taxon>
        <taxon>Chordata</taxon>
        <taxon>Craniata</taxon>
        <taxon>Vertebrata</taxon>
        <taxon>Euteleostomi</taxon>
        <taxon>Mammalia</taxon>
        <taxon>Eutheria</taxon>
        <taxon>Euarchontoglires</taxon>
        <taxon>Glires</taxon>
        <taxon>Rodentia</taxon>
        <taxon>Myomorpha</taxon>
        <taxon>Muroidea</taxon>
        <taxon>Muridae</taxon>
        <taxon>Murinae</taxon>
        <taxon>Mus</taxon>
        <taxon>Mus</taxon>
    </lineage>
</organism>
<proteinExistence type="evidence at protein level"/>
<reference key="1">
    <citation type="journal article" date="1995" name="FEBS Lett.">
        <title>Isolation of a novel ras-recision gene that is induced by hydrogen peroxide from a mouse osteoblastic cell line, MC3T3-E1.</title>
        <authorList>
            <person name="Egawa K."/>
            <person name="Yoshiwara M."/>
            <person name="Shibanuma M."/>
            <person name="Nose K."/>
        </authorList>
    </citation>
    <scope>NUCLEOTIDE SEQUENCE [MRNA] (ISOFORM 1)</scope>
    <scope>INDUCTION</scope>
    <source>
        <tissue>Calvaria</tissue>
    </source>
</reference>
<reference key="2">
    <citation type="journal article" date="1996" name="J. Biol. Chem.">
        <title>Identification and cDNA cloning of 35-kDa phosphatidic acid phosphatase (type 2) bound to plasma membranes.</title>
        <authorList>
            <person name="Kai M."/>
            <person name="Wada I."/>
            <person name="Imai S."/>
            <person name="Sakane F."/>
            <person name="Kanoh H."/>
        </authorList>
    </citation>
    <scope>NUCLEOTIDE SEQUENCE [MRNA] (ISOFORM 1)</scope>
    <scope>FUNCTION</scope>
    <scope>CATALYTIC ACTIVITY</scope>
    <scope>PATHWAY</scope>
    <scope>GLYCOSYLATION</scope>
    <source>
        <tissue>Kidney</tissue>
    </source>
</reference>
<reference key="3">
    <citation type="submission" date="2003-03" db="EMBL/GenBank/DDBJ databases">
        <authorList>
            <person name="Yokoyama K."/>
            <person name="Tigyi G."/>
        </authorList>
    </citation>
    <scope>NUCLEOTIDE SEQUENCE [MRNA] (ISOFORMS 1 AND 2)</scope>
    <source>
        <strain>FVB/N</strain>
    </source>
</reference>
<reference key="4">
    <citation type="journal article" date="2005" name="Science">
        <title>The transcriptional landscape of the mammalian genome.</title>
        <authorList>
            <person name="Carninci P."/>
            <person name="Kasukawa T."/>
            <person name="Katayama S."/>
            <person name="Gough J."/>
            <person name="Frith M.C."/>
            <person name="Maeda N."/>
            <person name="Oyama R."/>
            <person name="Ravasi T."/>
            <person name="Lenhard B."/>
            <person name="Wells C."/>
            <person name="Kodzius R."/>
            <person name="Shimokawa K."/>
            <person name="Bajic V.B."/>
            <person name="Brenner S.E."/>
            <person name="Batalov S."/>
            <person name="Forrest A.R."/>
            <person name="Zavolan M."/>
            <person name="Davis M.J."/>
            <person name="Wilming L.G."/>
            <person name="Aidinis V."/>
            <person name="Allen J.E."/>
            <person name="Ambesi-Impiombato A."/>
            <person name="Apweiler R."/>
            <person name="Aturaliya R.N."/>
            <person name="Bailey T.L."/>
            <person name="Bansal M."/>
            <person name="Baxter L."/>
            <person name="Beisel K.W."/>
            <person name="Bersano T."/>
            <person name="Bono H."/>
            <person name="Chalk A.M."/>
            <person name="Chiu K.P."/>
            <person name="Choudhary V."/>
            <person name="Christoffels A."/>
            <person name="Clutterbuck D.R."/>
            <person name="Crowe M.L."/>
            <person name="Dalla E."/>
            <person name="Dalrymple B.P."/>
            <person name="de Bono B."/>
            <person name="Della Gatta G."/>
            <person name="di Bernardo D."/>
            <person name="Down T."/>
            <person name="Engstrom P."/>
            <person name="Fagiolini M."/>
            <person name="Faulkner G."/>
            <person name="Fletcher C.F."/>
            <person name="Fukushima T."/>
            <person name="Furuno M."/>
            <person name="Futaki S."/>
            <person name="Gariboldi M."/>
            <person name="Georgii-Hemming P."/>
            <person name="Gingeras T.R."/>
            <person name="Gojobori T."/>
            <person name="Green R.E."/>
            <person name="Gustincich S."/>
            <person name="Harbers M."/>
            <person name="Hayashi Y."/>
            <person name="Hensch T.K."/>
            <person name="Hirokawa N."/>
            <person name="Hill D."/>
            <person name="Huminiecki L."/>
            <person name="Iacono M."/>
            <person name="Ikeo K."/>
            <person name="Iwama A."/>
            <person name="Ishikawa T."/>
            <person name="Jakt M."/>
            <person name="Kanapin A."/>
            <person name="Katoh M."/>
            <person name="Kawasawa Y."/>
            <person name="Kelso J."/>
            <person name="Kitamura H."/>
            <person name="Kitano H."/>
            <person name="Kollias G."/>
            <person name="Krishnan S.P."/>
            <person name="Kruger A."/>
            <person name="Kummerfeld S.K."/>
            <person name="Kurochkin I.V."/>
            <person name="Lareau L.F."/>
            <person name="Lazarevic D."/>
            <person name="Lipovich L."/>
            <person name="Liu J."/>
            <person name="Liuni S."/>
            <person name="McWilliam S."/>
            <person name="Madan Babu M."/>
            <person name="Madera M."/>
            <person name="Marchionni L."/>
            <person name="Matsuda H."/>
            <person name="Matsuzawa S."/>
            <person name="Miki H."/>
            <person name="Mignone F."/>
            <person name="Miyake S."/>
            <person name="Morris K."/>
            <person name="Mottagui-Tabar S."/>
            <person name="Mulder N."/>
            <person name="Nakano N."/>
            <person name="Nakauchi H."/>
            <person name="Ng P."/>
            <person name="Nilsson R."/>
            <person name="Nishiguchi S."/>
            <person name="Nishikawa S."/>
            <person name="Nori F."/>
            <person name="Ohara O."/>
            <person name="Okazaki Y."/>
            <person name="Orlando V."/>
            <person name="Pang K.C."/>
            <person name="Pavan W.J."/>
            <person name="Pavesi G."/>
            <person name="Pesole G."/>
            <person name="Petrovsky N."/>
            <person name="Piazza S."/>
            <person name="Reed J."/>
            <person name="Reid J.F."/>
            <person name="Ring B.Z."/>
            <person name="Ringwald M."/>
            <person name="Rost B."/>
            <person name="Ruan Y."/>
            <person name="Salzberg S.L."/>
            <person name="Sandelin A."/>
            <person name="Schneider C."/>
            <person name="Schoenbach C."/>
            <person name="Sekiguchi K."/>
            <person name="Semple C.A."/>
            <person name="Seno S."/>
            <person name="Sessa L."/>
            <person name="Sheng Y."/>
            <person name="Shibata Y."/>
            <person name="Shimada H."/>
            <person name="Shimada K."/>
            <person name="Silva D."/>
            <person name="Sinclair B."/>
            <person name="Sperling S."/>
            <person name="Stupka E."/>
            <person name="Sugiura K."/>
            <person name="Sultana R."/>
            <person name="Takenaka Y."/>
            <person name="Taki K."/>
            <person name="Tammoja K."/>
            <person name="Tan S.L."/>
            <person name="Tang S."/>
            <person name="Taylor M.S."/>
            <person name="Tegner J."/>
            <person name="Teichmann S.A."/>
            <person name="Ueda H.R."/>
            <person name="van Nimwegen E."/>
            <person name="Verardo R."/>
            <person name="Wei C.L."/>
            <person name="Yagi K."/>
            <person name="Yamanishi H."/>
            <person name="Zabarovsky E."/>
            <person name="Zhu S."/>
            <person name="Zimmer A."/>
            <person name="Hide W."/>
            <person name="Bult C."/>
            <person name="Grimmond S.M."/>
            <person name="Teasdale R.D."/>
            <person name="Liu E.T."/>
            <person name="Brusic V."/>
            <person name="Quackenbush J."/>
            <person name="Wahlestedt C."/>
            <person name="Mattick J.S."/>
            <person name="Hume D.A."/>
            <person name="Kai C."/>
            <person name="Sasaki D."/>
            <person name="Tomaru Y."/>
            <person name="Fukuda S."/>
            <person name="Kanamori-Katayama M."/>
            <person name="Suzuki M."/>
            <person name="Aoki J."/>
            <person name="Arakawa T."/>
            <person name="Iida J."/>
            <person name="Imamura K."/>
            <person name="Itoh M."/>
            <person name="Kato T."/>
            <person name="Kawaji H."/>
            <person name="Kawagashira N."/>
            <person name="Kawashima T."/>
            <person name="Kojima M."/>
            <person name="Kondo S."/>
            <person name="Konno H."/>
            <person name="Nakano K."/>
            <person name="Ninomiya N."/>
            <person name="Nishio T."/>
            <person name="Okada M."/>
            <person name="Plessy C."/>
            <person name="Shibata K."/>
            <person name="Shiraki T."/>
            <person name="Suzuki S."/>
            <person name="Tagami M."/>
            <person name="Waki K."/>
            <person name="Watahiki A."/>
            <person name="Okamura-Oho Y."/>
            <person name="Suzuki H."/>
            <person name="Kawai J."/>
            <person name="Hayashizaki Y."/>
        </authorList>
    </citation>
    <scope>NUCLEOTIDE SEQUENCE [LARGE SCALE MRNA] (ISOFORM 2)</scope>
    <source>
        <strain>C57BL/6J</strain>
        <tissue>Ovary</tissue>
        <tissue>Uterus</tissue>
    </source>
</reference>
<reference key="5">
    <citation type="journal article" date="2004" name="Genome Res.">
        <title>The status, quality, and expansion of the NIH full-length cDNA project: the Mammalian Gene Collection (MGC).</title>
        <authorList>
            <consortium name="The MGC Project Team"/>
        </authorList>
    </citation>
    <scope>NUCLEOTIDE SEQUENCE [LARGE SCALE MRNA] (ISOFORM 2)</scope>
    <source>
        <tissue>Testis</tissue>
    </source>
</reference>
<reference key="6">
    <citation type="journal article" date="1999" name="Biochem. J.">
        <title>Lipid phosphate phosphohydrolase-1 degrades exogenous glycerolipid and sphingolipid phosphate esters.</title>
        <authorList>
            <person name="Jasinska R."/>
            <person name="Zhang Q.-X."/>
            <person name="Pilquil C."/>
            <person name="Singh I."/>
            <person name="Xu J."/>
            <person name="Dewald J."/>
            <person name="Dillon D.A."/>
            <person name="Berthiaume L.G."/>
            <person name="Carman G.M."/>
            <person name="Waggoner D.W."/>
            <person name="Brindley D.N."/>
        </authorList>
    </citation>
    <scope>FUNCTION</scope>
    <scope>CATALYTIC ACTIVITY</scope>
    <scope>SUBSTRATE SPECIFICITY</scope>
    <scope>PATHWAY</scope>
    <scope>SUBCELLULAR LOCATION</scope>
    <scope>TOPOLOGY</scope>
    <source>
        <tissue>Liver</tissue>
    </source>
</reference>
<reference key="7">
    <citation type="journal article" date="2004" name="BMC Biochem.">
        <title>Lipid phosphate phosphatases dimerise, but this interaction is not required for in vivo activity.</title>
        <authorList>
            <person name="Burnett C."/>
            <person name="Makridou P."/>
            <person name="Hewlett L."/>
            <person name="Howard K."/>
        </authorList>
    </citation>
    <scope>SUBUNIT</scope>
</reference>
<reference key="8">
    <citation type="journal article" date="2000" name="Ann. N. Y. Acad. Sci.">
        <title>Lipid phosphate phosphatase-1 in the regulation of lysophosphatidate signaling.</title>
        <authorList>
            <person name="Xu J."/>
            <person name="Zhang Q.X."/>
            <person name="Pilquil C."/>
            <person name="Berthiaume L.G."/>
            <person name="Waggoner D.W."/>
            <person name="Brindley D.N."/>
        </authorList>
    </citation>
    <scope>FUNCTION</scope>
    <scope>CATALYTIC ACTIVITY</scope>
    <scope>BIOPHYSICOCHEMICAL PROPERTIES</scope>
    <scope>SUBSTRATE SPECIFICITY</scope>
    <scope>PATHWAY</scope>
</reference>
<reference key="9">
    <citation type="journal article" date="2000" name="Biochem. J.">
        <title>Identification of structurally important domains of lipid phosphate phosphatase-1: implications for its sites of action.</title>
        <authorList>
            <person name="Zhang Q.X."/>
            <person name="Pilquil C.S."/>
            <person name="Dewald J."/>
            <person name="Berthiaume L.G."/>
            <person name="Brindley D.N."/>
        </authorList>
    </citation>
    <scope>FUNCTION</scope>
    <scope>CATALYTIC ACTIVITY</scope>
    <scope>PATHWAY</scope>
    <scope>GLYCOSYLATION AT ASN-142</scope>
    <scope>MUTAGENESIS OF THR-5; LEU-106; THR-116; LYS-120; THR-122; ARG-127; PRO-128; ASN-142; TYR-168; SER-169; GLY-170; HIS-171; ARG-217; TYR-221; HIS-223; ILE-233 AND ASN-276</scope>
</reference>
<reference key="10">
    <citation type="journal article" date="2001" name="Biochem. J.">
        <title>Pulmonary lipid phosphate phosphohydrolase in plasma membrane signalling platforms.</title>
        <authorList>
            <person name="Nanjundan M."/>
            <person name="Possmayer F."/>
        </authorList>
    </citation>
    <scope>SUBCELLULAR LOCATION</scope>
</reference>
<reference key="11">
    <citation type="journal article" date="2004" name="Cell. Signal.">
        <title>Mice with transgenic overexpression of lipid phosphate phosphatase-1 display multiple organotypic deficits without alteration in circulating lysophosphatidate level.</title>
        <authorList>
            <person name="Yue J."/>
            <person name="Yokoyama K."/>
            <person name="Balazs L."/>
            <person name="Baker D.L."/>
            <person name="Smalley D."/>
            <person name="Pilquil C."/>
            <person name="Brindley D.N."/>
            <person name="Tigyi G."/>
        </authorList>
    </citation>
    <scope>OVEREXPRESSION</scope>
</reference>
<reference key="12">
    <citation type="journal article" date="2005" name="Biochem. J.">
        <title>Lipid phosphate phosphatase-1 regulates lysophosphatidic acid-induced calcium release, NF-kappaB activation and interleukin-8 secretion in human bronchial epithelial cells.</title>
        <authorList>
            <person name="Zhao Y."/>
            <person name="Usatyuk P.V."/>
            <person name="Cummings R."/>
            <person name="Saatian B."/>
            <person name="He D."/>
            <person name="Watkins T."/>
            <person name="Morris A."/>
            <person name="Spannhake E.W."/>
            <person name="Brindley D.N."/>
            <person name="Natarajan V."/>
        </authorList>
    </citation>
    <scope>FUNCTION</scope>
    <scope>CATALYTIC ACTIVITY</scope>
    <scope>PATHWAY</scope>
    <scope>MUTAGENESIS OF ARG-217</scope>
</reference>
<reference key="13">
    <citation type="journal article" date="2006" name="J. Biol. Chem.">
        <title>Lipid phosphate phosphatase-1 regulates lysophosphatidate-induced fibroblast migration by controlling phospholipase D2-dependent phosphatidate generation.</title>
        <authorList>
            <person name="Pilquil C."/>
            <person name="Dewald J."/>
            <person name="Cherney A."/>
            <person name="Gorshkova I."/>
            <person name="Tigyi G."/>
            <person name="English D."/>
            <person name="Natarajan V."/>
            <person name="Brindley D.N."/>
        </authorList>
    </citation>
    <scope>FUNCTION</scope>
</reference>
<reference key="14">
    <citation type="journal article" date="2007" name="J. Biol. Chem.">
        <title>Intracellular generation of sphingosine 1-phosphate in human lung endothelial cells: role of lipid phosphate phosphatase-1 and sphingosine kinase 1.</title>
        <authorList>
            <person name="Zhao Y."/>
            <person name="Kalari S.K."/>
            <person name="Usatyuk P.V."/>
            <person name="Gorshkova I."/>
            <person name="He D."/>
            <person name="Watkins T."/>
            <person name="Brindley D.N."/>
            <person name="Sun C."/>
            <person name="Bittman R."/>
            <person name="Garcia J.G."/>
            <person name="Berdyshev E.V."/>
            <person name="Natarajan V."/>
        </authorList>
    </citation>
    <scope>FUNCTION</scope>
    <scope>CATALYTIC ACTIVITY</scope>
    <scope>PATHWAY</scope>
    <scope>SUBCELLULAR LOCATION</scope>
</reference>
<reference key="15">
    <citation type="journal article" date="2009" name="Biochem. J.">
        <title>Lipid phosphate phosphohydrolase type 1 (LPP1) degrades extracellular lysophosphatidic acid in vivo.</title>
        <authorList>
            <person name="Tomsig J.L."/>
            <person name="Snyder A.H."/>
            <person name="Berdyshev E.V."/>
            <person name="Skobeleva A."/>
            <person name="Mataya C."/>
            <person name="Natarajan V."/>
            <person name="Brindley D.N."/>
            <person name="Lynch K.R."/>
        </authorList>
    </citation>
    <scope>FUNCTION</scope>
    <scope>CATALYTIC ACTIVITY</scope>
    <scope>SUBSTRATE SPECIFICITY</scope>
    <scope>PATHWAY</scope>
    <scope>SUBCELLULAR LOCATION</scope>
    <scope>TISSUE SPECIFICITY</scope>
</reference>
<reference key="16">
    <citation type="journal article" date="2009" name="Immunity">
        <title>The phagosomal proteome in interferon-gamma-activated macrophages.</title>
        <authorList>
            <person name="Trost M."/>
            <person name="English L."/>
            <person name="Lemieux S."/>
            <person name="Courcelles M."/>
            <person name="Desjardins M."/>
            <person name="Thibault P."/>
        </authorList>
    </citation>
    <scope>IDENTIFICATION BY MASS SPECTROMETRY [LARGE SCALE ANALYSIS]</scope>
</reference>
<reference key="17">
    <citation type="journal article" date="2010" name="Cell">
        <title>A tissue-specific atlas of mouse protein phosphorylation and expression.</title>
        <authorList>
            <person name="Huttlin E.L."/>
            <person name="Jedrychowski M.P."/>
            <person name="Elias J.E."/>
            <person name="Goswami T."/>
            <person name="Rad R."/>
            <person name="Beausoleil S.A."/>
            <person name="Villen J."/>
            <person name="Haas W."/>
            <person name="Sowa M.E."/>
            <person name="Gygi S.P."/>
        </authorList>
    </citation>
    <scope>IDENTIFICATION BY MASS SPECTROMETRY [LARGE SCALE ANALYSIS]</scope>
    <source>
        <tissue>Heart</tissue>
        <tissue>Kidney</tissue>
        <tissue>Lung</tissue>
        <tissue>Spleen</tissue>
        <tissue>Testis</tissue>
    </source>
</reference>
<feature type="chain" id="PRO_0000220906" description="Phospholipid phosphatase 1">
    <location>
        <begin position="1"/>
        <end position="283"/>
    </location>
</feature>
<feature type="topological domain" description="Cytoplasmic" evidence="22">
    <location>
        <begin position="1"/>
        <end position="6"/>
    </location>
</feature>
<feature type="transmembrane region" description="Helical" evidence="5">
    <location>
        <begin position="7"/>
        <end position="27"/>
    </location>
</feature>
<feature type="topological domain" description="Extracellular" evidence="22">
    <location>
        <begin position="28"/>
        <end position="53"/>
    </location>
</feature>
<feature type="transmembrane region" description="Helical" evidence="5">
    <location>
        <begin position="54"/>
        <end position="74"/>
    </location>
</feature>
<feature type="topological domain" description="Cytoplasmic" evidence="22">
    <location>
        <begin position="75"/>
        <end position="88"/>
    </location>
</feature>
<feature type="transmembrane region" description="Helical" evidence="5">
    <location>
        <begin position="89"/>
        <end position="109"/>
    </location>
</feature>
<feature type="topological domain" description="Extracellular" evidence="22">
    <location>
        <begin position="110"/>
        <end position="164"/>
    </location>
</feature>
<feature type="transmembrane region" description="Helical" evidence="5">
    <location>
        <begin position="165"/>
        <end position="185"/>
    </location>
</feature>
<feature type="topological domain" description="Cytoplasmic" evidence="22">
    <location>
        <begin position="186"/>
        <end position="199"/>
    </location>
</feature>
<feature type="transmembrane region" description="Helical" evidence="5">
    <location>
        <begin position="200"/>
        <end position="220"/>
    </location>
</feature>
<feature type="topological domain" description="Extracellular" evidence="22">
    <location>
        <begin position="221"/>
        <end position="229"/>
    </location>
</feature>
<feature type="transmembrane region" description="Helical" evidence="5">
    <location>
        <begin position="230"/>
        <end position="250"/>
    </location>
</feature>
<feature type="topological domain" description="Cytoplasmic" evidence="7">
    <location>
        <begin position="251"/>
        <end position="283"/>
    </location>
</feature>
<feature type="region of interest" description="Phosphatase sequence motif I" evidence="3">
    <location>
        <begin position="120"/>
        <end position="128"/>
    </location>
</feature>
<feature type="region of interest" description="Phosphatase sequence motif II" evidence="3">
    <location>
        <begin position="168"/>
        <end position="171"/>
    </location>
</feature>
<feature type="region of interest" description="Phosphatase sequence motif III" evidence="3">
    <location>
        <begin position="216"/>
        <end position="227"/>
    </location>
</feature>
<feature type="region of interest" description="Disordered" evidence="6">
    <location>
        <begin position="260"/>
        <end position="283"/>
    </location>
</feature>
<feature type="short sequence motif" description="PDZ-binding; involved in localization to the apical cell membrane" evidence="2">
    <location>
        <begin position="5"/>
        <end position="7"/>
    </location>
</feature>
<feature type="compositionally biased region" description="Polar residues" evidence="6">
    <location>
        <begin position="269"/>
        <end position="283"/>
    </location>
</feature>
<feature type="active site" description="Proton donors" evidence="3">
    <location>
        <position position="171"/>
    </location>
</feature>
<feature type="active site" description="Nucleophile" evidence="3">
    <location>
        <position position="223"/>
    </location>
</feature>
<feature type="site" description="Stabilizes the active site histidine for nucleophilic attack" evidence="3">
    <location>
        <position position="227"/>
    </location>
</feature>
<feature type="glycosylation site" description="N-linked (GlcNAc...) asparagine" evidence="8">
    <location>
        <position position="142"/>
    </location>
</feature>
<feature type="splice variant" id="VSP_009652" description="In isoform 2." evidence="18 19 20">
    <original>GLPFAILTSRHTPFQRGIFCNDDSIKYPYKEDTIPYALLGGIVIPFCIIV</original>
    <variation>AMPMTILKLGKVYPFQRGFFCTDNSVKYPYHDSTIPSRILAILGLGLPIFS</variation>
    <location>
        <begin position="21"/>
        <end position="70"/>
    </location>
</feature>
<feature type="mutagenesis site" description="Decreased lipid phosphatase activity." evidence="8">
    <original>T</original>
    <variation>P</variation>
    <location>
        <position position="5"/>
    </location>
</feature>
<feature type="mutagenesis site" description="Decreased lipid phosphatase activity." evidence="8">
    <original>L</original>
    <variation>S</variation>
    <location>
        <position position="106"/>
    </location>
</feature>
<feature type="mutagenesis site" description="No significant effect on lipid phosphatase activity." evidence="8">
    <original>T</original>
    <variation>I</variation>
    <location>
        <position position="116"/>
    </location>
</feature>
<feature type="mutagenesis site" description="Loss of lipid phosphatase activity." evidence="8">
    <original>K</original>
    <variation>R</variation>
    <location>
        <position position="120"/>
    </location>
</feature>
<feature type="mutagenesis site" description="No effect on lipid phosphatase activity." evidence="8">
    <original>T</original>
    <variation>S</variation>
    <location>
        <position position="122"/>
    </location>
</feature>
<feature type="mutagenesis site" description="Loss of lipid phosphatase activity." evidence="8">
    <original>R</original>
    <variation>K</variation>
    <location>
        <position position="127"/>
    </location>
</feature>
<feature type="mutagenesis site" description="Loss of lipid phosphatase activity." evidence="8">
    <original>P</original>
    <variation>I</variation>
    <location>
        <position position="128"/>
    </location>
</feature>
<feature type="mutagenesis site" description="Loss of N-glycosylation. No significant effect on lipid phosphatase activity." evidence="8">
    <original>N</original>
    <variation>Q</variation>
    <location>
        <position position="142"/>
    </location>
</feature>
<feature type="mutagenesis site" description="Decreased lipid phosphatase activity." evidence="8">
    <original>Y</original>
    <variation>F</variation>
    <location>
        <position position="168"/>
    </location>
</feature>
<feature type="mutagenesis site" description="Loss of lipid phosphatase activity." evidence="8">
    <original>S</original>
    <variation>T</variation>
    <location>
        <position position="169"/>
    </location>
</feature>
<feature type="mutagenesis site" description="Decreased lipid phosphatase activity." evidence="8">
    <original>G</original>
    <variation>A</variation>
    <location>
        <position position="170"/>
    </location>
</feature>
<feature type="mutagenesis site" description="Loss of lipid phosphatase activity." evidence="8">
    <original>H</original>
    <variation>L</variation>
    <location>
        <position position="171"/>
    </location>
</feature>
<feature type="mutagenesis site" description="Loss of lipid phosphatase activity." evidence="8 12">
    <original>R</original>
    <variation>K</variation>
    <location>
        <position position="217"/>
    </location>
</feature>
<feature type="mutagenesis site" description="Decreased lipid phosphatase activity." evidence="8">
    <original>Y</original>
    <variation>W</variation>
    <location>
        <position position="221"/>
    </location>
</feature>
<feature type="mutagenesis site" description="Loss of lipid phosphatase activity." evidence="8">
    <original>H</original>
    <variation>L</variation>
    <location>
        <position position="223"/>
    </location>
</feature>
<feature type="mutagenesis site" description="No significant effect on lipid phosphatase activity." evidence="8">
    <original>I</original>
    <variation>T</variation>
    <location>
        <position position="233"/>
    </location>
</feature>
<feature type="mutagenesis site" description="No effect on lipid phosphatase activity." evidence="8">
    <original>N</original>
    <variation>Q</variation>
    <location>
        <position position="276"/>
    </location>
</feature>
<sequence>MFDKTRLPYVALDVICVLLAGLPFAILTSRHTPFQRGIFCNDDSIKYPYKEDTIPYALLGGIVIPFCIIVMSIGESLSVYFNVLHSNSFVGNPYIATIYKAVGAFLFGVSASQSLTDIAKYTIGSLRPHFLAICNPDWSKINCSDGYIEDYICQGNEEKVKEGRLSFYSGHSSFSMYCMLFVALYLQARMKGDWARLLRPMLQFGLIAFSIYVGLSRVSDYKHHWSDVTVGLIQGAAMAILVALYVSDFFKDTHSYKERKEEDPHTTLHETASSRNYSTNHEP</sequence>
<comment type="function">
    <text evidence="2 7 8 9 12 13 14 15 17">Magnesium-independent phospholipid phosphatase of the plasma membrane that catalyzes the dephosphorylation of a variety of glycerolipid and sphingolipid phosphate esters including phosphatidate/PA, lysophosphatidate/LPA, diacylglycerol pyrophosphate/DGPP, sphingosine 1-phosphate/S1P and ceramide 1-phosphate/C1P (PubMed:10359651, PubMed:10620492, PubMed:10818444, PubMed:15461590, PubMed:19215222, PubMed:8702556). Also acts on N-oleoyl ethanolamine phosphate/N-(9Z-octadecenoyl)-ethanolamine phosphate, a potential physiological compound (By similarity). Through its extracellular phosphatase activity allows both the hydrolysis and the cellular uptake of these bioactive lipid mediators from the milieu, regulating signal transduction in different cellular processes (PubMed:17379599). It is for instance essential for the extracellular hydrolysis of S1P and subsequent conversion into intracellular S1P (PubMed:17379599). Involved in the regulation of inflammation, platelets activation, cell proliferation and migration among other processes (PubMed:15461590, PubMed:17057224). May also have an intracellular activity to regulate phospholipid-mediated signaling pathways (PubMed:17057224).</text>
</comment>
<comment type="catalytic activity">
    <reaction evidence="7 15 17">
        <text>a 1,2-diacyl-sn-glycero-3-phosphate + H2O = a 1,2-diacyl-sn-glycerol + phosphate</text>
        <dbReference type="Rhea" id="RHEA:27429"/>
        <dbReference type="ChEBI" id="CHEBI:15377"/>
        <dbReference type="ChEBI" id="CHEBI:17815"/>
        <dbReference type="ChEBI" id="CHEBI:43474"/>
        <dbReference type="ChEBI" id="CHEBI:58608"/>
        <dbReference type="EC" id="3.1.3.4"/>
    </reaction>
    <physiologicalReaction direction="left-to-right" evidence="22">
        <dbReference type="Rhea" id="RHEA:27430"/>
    </physiologicalReaction>
</comment>
<comment type="catalytic activity">
    <reaction evidence="2">
        <text>1,2-dihexadecanoyl-sn-glycero-3-phosphate + H2O = 1,2-dihexadecanoyl-sn-glycerol + phosphate</text>
        <dbReference type="Rhea" id="RHEA:43236"/>
        <dbReference type="ChEBI" id="CHEBI:15377"/>
        <dbReference type="ChEBI" id="CHEBI:43474"/>
        <dbReference type="ChEBI" id="CHEBI:72859"/>
        <dbReference type="ChEBI" id="CHEBI:82929"/>
    </reaction>
    <physiologicalReaction direction="left-to-right" evidence="2">
        <dbReference type="Rhea" id="RHEA:43237"/>
    </physiologicalReaction>
</comment>
<comment type="catalytic activity">
    <reaction evidence="15 17">
        <text>1,2-di-(9Z-octadecenoyl)-sn-glycero-3-phosphate + H2O = 1,2-di-(9Z-octadecenoyl)-sn-glycerol + phosphate</text>
        <dbReference type="Rhea" id="RHEA:43244"/>
        <dbReference type="ChEBI" id="CHEBI:15377"/>
        <dbReference type="ChEBI" id="CHEBI:43474"/>
        <dbReference type="ChEBI" id="CHEBI:52333"/>
        <dbReference type="ChEBI" id="CHEBI:74546"/>
    </reaction>
    <physiologicalReaction direction="left-to-right" evidence="15">
        <dbReference type="Rhea" id="RHEA:43245"/>
    </physiologicalReaction>
</comment>
<comment type="catalytic activity">
    <reaction evidence="7 8 9">
        <text>a monoacyl-sn-glycero-3-phosphate + H2O = a monoacylglycerol + phosphate</text>
        <dbReference type="Rhea" id="RHEA:46736"/>
        <dbReference type="ChEBI" id="CHEBI:15377"/>
        <dbReference type="ChEBI" id="CHEBI:17408"/>
        <dbReference type="ChEBI" id="CHEBI:43474"/>
        <dbReference type="ChEBI" id="CHEBI:77589"/>
    </reaction>
    <physiologicalReaction direction="left-to-right" evidence="7">
        <dbReference type="Rhea" id="RHEA:46737"/>
    </physiologicalReaction>
</comment>
<comment type="catalytic activity">
    <reaction evidence="9">
        <text>(9Z)-octadecenoyl-sn-glycero-3-phosphate + H2O = (9Z-octadecenoyl)-glycerol + phosphate</text>
        <dbReference type="Rhea" id="RHEA:50884"/>
        <dbReference type="ChEBI" id="CHEBI:15377"/>
        <dbReference type="ChEBI" id="CHEBI:43474"/>
        <dbReference type="ChEBI" id="CHEBI:75937"/>
        <dbReference type="ChEBI" id="CHEBI:84973"/>
    </reaction>
    <physiologicalReaction direction="left-to-right" evidence="23">
        <dbReference type="Rhea" id="RHEA:50885"/>
    </physiologicalReaction>
</comment>
<comment type="catalytic activity">
    <reaction evidence="12 15">
        <text>a 1-acyl-sn-glycero-3-phosphate + H2O = a 1-acyl-sn-glycerol + phosphate</text>
        <dbReference type="Rhea" id="RHEA:33155"/>
        <dbReference type="ChEBI" id="CHEBI:15377"/>
        <dbReference type="ChEBI" id="CHEBI:43474"/>
        <dbReference type="ChEBI" id="CHEBI:57970"/>
        <dbReference type="ChEBI" id="CHEBI:64683"/>
        <dbReference type="EC" id="3.1.3.106"/>
    </reaction>
    <physiologicalReaction direction="left-to-right" evidence="24">
        <dbReference type="Rhea" id="RHEA:33156"/>
    </physiologicalReaction>
</comment>
<comment type="catalytic activity">
    <reaction evidence="12 15">
        <text>1-(9Z-octadecenoyl)-sn-glycero-3-phosphate + H2O = 1-(9Z-octadecenoyl)-sn-glycerol + phosphate</text>
        <dbReference type="Rhea" id="RHEA:39835"/>
        <dbReference type="ChEBI" id="CHEBI:15377"/>
        <dbReference type="ChEBI" id="CHEBI:43474"/>
        <dbReference type="ChEBI" id="CHEBI:74544"/>
        <dbReference type="ChEBI" id="CHEBI:75757"/>
    </reaction>
    <physiologicalReaction direction="left-to-right" evidence="15">
        <dbReference type="Rhea" id="RHEA:39836"/>
    </physiologicalReaction>
</comment>
<comment type="catalytic activity">
    <reaction evidence="7">
        <text>a 1,2-diacyl-sn-glycerol 3-diphosphate + H2O = a 1,2-diacyl-sn-glycero-3-phosphate + phosphate + H(+)</text>
        <dbReference type="Rhea" id="RHEA:27449"/>
        <dbReference type="ChEBI" id="CHEBI:15377"/>
        <dbReference type="ChEBI" id="CHEBI:15378"/>
        <dbReference type="ChEBI" id="CHEBI:43474"/>
        <dbReference type="ChEBI" id="CHEBI:58608"/>
        <dbReference type="ChEBI" id="CHEBI:59996"/>
        <dbReference type="EC" id="3.6.1.75"/>
    </reaction>
    <physiologicalReaction direction="left-to-right" evidence="22">
        <dbReference type="Rhea" id="RHEA:27450"/>
    </physiologicalReaction>
</comment>
<comment type="catalytic activity">
    <reaction evidence="7 14">
        <text>sphing-4-enine 1-phosphate + H2O = sphing-4-enine + phosphate</text>
        <dbReference type="Rhea" id="RHEA:27518"/>
        <dbReference type="ChEBI" id="CHEBI:15377"/>
        <dbReference type="ChEBI" id="CHEBI:43474"/>
        <dbReference type="ChEBI" id="CHEBI:57756"/>
        <dbReference type="ChEBI" id="CHEBI:60119"/>
    </reaction>
    <physiologicalReaction direction="left-to-right" evidence="22">
        <dbReference type="Rhea" id="RHEA:27519"/>
    </physiologicalReaction>
</comment>
<comment type="catalytic activity">
    <reaction evidence="7">
        <text>an N-acylsphing-4-enine 1-phosphate + H2O = an N-acylsphing-4-enine + phosphate</text>
        <dbReference type="Rhea" id="RHEA:33743"/>
        <dbReference type="ChEBI" id="CHEBI:15377"/>
        <dbReference type="ChEBI" id="CHEBI:43474"/>
        <dbReference type="ChEBI" id="CHEBI:52639"/>
        <dbReference type="ChEBI" id="CHEBI:57674"/>
    </reaction>
    <physiologicalReaction direction="left-to-right" evidence="22">
        <dbReference type="Rhea" id="RHEA:33744"/>
    </physiologicalReaction>
</comment>
<comment type="catalytic activity">
    <reaction evidence="2">
        <text>N-(octanoyl)-sphing-4-enine-1-phosphate + H2O = N-octanoylsphing-4-enine + phosphate</text>
        <dbReference type="Rhea" id="RHEA:62040"/>
        <dbReference type="ChEBI" id="CHEBI:15377"/>
        <dbReference type="ChEBI" id="CHEBI:43474"/>
        <dbReference type="ChEBI" id="CHEBI:45815"/>
        <dbReference type="ChEBI" id="CHEBI:85376"/>
    </reaction>
    <physiologicalReaction direction="left-to-right" evidence="2">
        <dbReference type="Rhea" id="RHEA:62041"/>
    </physiologicalReaction>
</comment>
<comment type="catalytic activity">
    <reaction evidence="2">
        <text>N-(9Z-octadecenoyl)-ethanolamine phosphate + H2O = N-(9Z-octadecenoyl) ethanolamine + phosphate</text>
        <dbReference type="Rhea" id="RHEA:62160"/>
        <dbReference type="ChEBI" id="CHEBI:15377"/>
        <dbReference type="ChEBI" id="CHEBI:43474"/>
        <dbReference type="ChEBI" id="CHEBI:71466"/>
        <dbReference type="ChEBI" id="CHEBI:145465"/>
    </reaction>
    <physiologicalReaction direction="left-to-right" evidence="2">
        <dbReference type="Rhea" id="RHEA:62161"/>
    </physiologicalReaction>
</comment>
<comment type="catalytic activity">
    <reaction evidence="1">
        <text>1-hexadecanoyl-2-(9Z-octadecenoyl)-sn-glycero-3-phosphate + H2O = 1-hexadecanoyl-2-(9Z-octadecenoyl)-sn-glycerol + phosphate</text>
        <dbReference type="Rhea" id="RHEA:41255"/>
        <dbReference type="ChEBI" id="CHEBI:15377"/>
        <dbReference type="ChEBI" id="CHEBI:43474"/>
        <dbReference type="ChEBI" id="CHEBI:64839"/>
        <dbReference type="ChEBI" id="CHEBI:75466"/>
    </reaction>
    <physiologicalReaction direction="left-to-right" evidence="1">
        <dbReference type="Rhea" id="RHEA:41256"/>
    </physiologicalReaction>
</comment>
<comment type="activity regulation">
    <text evidence="2">Magnesium-independent phospholipid phosphatase. Insensitive to N-ethylmaleimide.</text>
</comment>
<comment type="biophysicochemical properties">
    <kinetics>
        <KM evidence="9">67 uM for 1,2-di-(9Z-octadecenoyl)-sn-glycero-3-phosphate</KM>
        <Vmax evidence="9">1.25 nmol/min/mg enzyme with 1,2-di-(9Z-octadecenoyl)-sn-glycero-3-phosphate as substrate</Vmax>
    </kinetics>
</comment>
<comment type="pathway">
    <text evidence="7 8 9 12 14 15 17">Lipid metabolism; phospholipid metabolism.</text>
</comment>
<comment type="subunit">
    <text evidence="4 11">Forms functional homodimers and homooligomers that are not required for substrate recognition and catalytic activity (PubMed:14725715). Can also form heterooligomers with PLPP2 and PLPP3 (By similarity).</text>
</comment>
<comment type="subcellular location">
    <subcellularLocation>
        <location evidence="7 14 15">Cell membrane</location>
        <topology evidence="5">Multi-pass membrane protein</topology>
    </subcellularLocation>
    <subcellularLocation>
        <location evidence="2">Apical cell membrane</location>
        <topology evidence="5">Multi-pass membrane protein</topology>
    </subcellularLocation>
    <subcellularLocation>
        <location evidence="2">Membrane raft</location>
        <topology evidence="5">Multi-pass membrane protein</topology>
    </subcellularLocation>
    <subcellularLocation>
        <location evidence="10">Membrane</location>
        <location evidence="10">Caveola</location>
        <topology evidence="5">Multi-pass membrane protein</topology>
    </subcellularLocation>
</comment>
<comment type="alternative products">
    <event type="alternative splicing"/>
    <isoform>
        <id>Q61469-1</id>
        <name>1</name>
        <sequence type="displayed"/>
    </isoform>
    <isoform>
        <id>Q61469-2</id>
        <name>2</name>
        <sequence type="described" ref="VSP_009652"/>
    </isoform>
</comment>
<comment type="tissue specificity">
    <text evidence="15">Widely expressed (PubMed:19215222). Highly expressed in kidney and lung. Almost undetectable in brain, heart, bone, muscle or spleen.</text>
</comment>
<comment type="induction">
    <text evidence="16">Moderately, by hydrogen peroxide, calcium ionophore and dexamethasone.</text>
</comment>
<comment type="PTM">
    <text evidence="8 17">N-glycosylated (PubMed:10620492, PubMed:8702556). N-linked sugars are of the complex type (PubMed:8702556). N-glycosylation is not required for the phosphatase activity (PubMed:10620492).</text>
</comment>
<comment type="miscellaneous">
    <text>Overexpression elicited a number of phenotypic alteration without affecting several aspects of LPA signaling. Phenotypic abnormalities affect primarily three organs: the liver, the skin, and the reproductive organs. There is a reduction on body size, birth weight, abnormalities in fur growth, and a severely impaired spermatogenesis.</text>
</comment>
<comment type="similarity">
    <text evidence="21">Belongs to the PA-phosphatase related phosphoesterase family.</text>
</comment>
<comment type="sequence caution" evidence="21">
    <conflict type="frameshift">
        <sequence resource="EMBL-CDS" id="AAA85353"/>
    </conflict>
</comment>
<keyword id="KW-0025">Alternative splicing</keyword>
<keyword id="KW-1003">Cell membrane</keyword>
<keyword id="KW-0325">Glycoprotein</keyword>
<keyword id="KW-0378">Hydrolase</keyword>
<keyword id="KW-0443">Lipid metabolism</keyword>
<keyword id="KW-0472">Membrane</keyword>
<keyword id="KW-1185">Reference proteome</keyword>
<keyword id="KW-0812">Transmembrane</keyword>
<keyword id="KW-1133">Transmembrane helix</keyword>
<evidence type="ECO:0000250" key="1">
    <source>
        <dbReference type="UniProtKB" id="O08564"/>
    </source>
</evidence>
<evidence type="ECO:0000250" key="2">
    <source>
        <dbReference type="UniProtKB" id="O14494"/>
    </source>
</evidence>
<evidence type="ECO:0000250" key="3">
    <source>
        <dbReference type="UniProtKB" id="O34349"/>
    </source>
</evidence>
<evidence type="ECO:0000250" key="4">
    <source>
        <dbReference type="UniProtKB" id="O88956"/>
    </source>
</evidence>
<evidence type="ECO:0000255" key="5"/>
<evidence type="ECO:0000256" key="6">
    <source>
        <dbReference type="SAM" id="MobiDB-lite"/>
    </source>
</evidence>
<evidence type="ECO:0000269" key="7">
    <source>
    </source>
</evidence>
<evidence type="ECO:0000269" key="8">
    <source>
    </source>
</evidence>
<evidence type="ECO:0000269" key="9">
    <source>
    </source>
</evidence>
<evidence type="ECO:0000269" key="10">
    <source>
    </source>
</evidence>
<evidence type="ECO:0000269" key="11">
    <source>
    </source>
</evidence>
<evidence type="ECO:0000269" key="12">
    <source>
    </source>
</evidence>
<evidence type="ECO:0000269" key="13">
    <source>
    </source>
</evidence>
<evidence type="ECO:0000269" key="14">
    <source>
    </source>
</evidence>
<evidence type="ECO:0000269" key="15">
    <source>
    </source>
</evidence>
<evidence type="ECO:0000269" key="16">
    <source>
    </source>
</evidence>
<evidence type="ECO:0000269" key="17">
    <source>
    </source>
</evidence>
<evidence type="ECO:0000303" key="18">
    <source>
    </source>
</evidence>
<evidence type="ECO:0000303" key="19">
    <source>
    </source>
</evidence>
<evidence type="ECO:0000303" key="20">
    <source ref="3"/>
</evidence>
<evidence type="ECO:0000305" key="21"/>
<evidence type="ECO:0000305" key="22">
    <source>
    </source>
</evidence>
<evidence type="ECO:0000305" key="23">
    <source>
    </source>
</evidence>
<evidence type="ECO:0000305" key="24">
    <source>
    </source>
</evidence>
<evidence type="ECO:0000312" key="25">
    <source>
        <dbReference type="MGI" id="MGI:108412"/>
    </source>
</evidence>